<name>RS4_LISMF</name>
<dbReference type="EMBL" id="AE017262">
    <property type="protein sequence ID" value="AAT04393.1"/>
    <property type="molecule type" value="Genomic_DNA"/>
</dbReference>
<dbReference type="RefSeq" id="WP_010958917.1">
    <property type="nucleotide sequence ID" value="NC_002973.6"/>
</dbReference>
<dbReference type="SMR" id="Q71Z71"/>
<dbReference type="KEGG" id="lmf:LMOf2365_1618"/>
<dbReference type="HOGENOM" id="CLU_092403_0_1_9"/>
<dbReference type="GO" id="GO:0015935">
    <property type="term" value="C:small ribosomal subunit"/>
    <property type="evidence" value="ECO:0007669"/>
    <property type="project" value="InterPro"/>
</dbReference>
<dbReference type="GO" id="GO:0019843">
    <property type="term" value="F:rRNA binding"/>
    <property type="evidence" value="ECO:0007669"/>
    <property type="project" value="UniProtKB-UniRule"/>
</dbReference>
<dbReference type="GO" id="GO:0003735">
    <property type="term" value="F:structural constituent of ribosome"/>
    <property type="evidence" value="ECO:0007669"/>
    <property type="project" value="InterPro"/>
</dbReference>
<dbReference type="GO" id="GO:0042274">
    <property type="term" value="P:ribosomal small subunit biogenesis"/>
    <property type="evidence" value="ECO:0007669"/>
    <property type="project" value="TreeGrafter"/>
</dbReference>
<dbReference type="GO" id="GO:0006412">
    <property type="term" value="P:translation"/>
    <property type="evidence" value="ECO:0007669"/>
    <property type="project" value="UniProtKB-UniRule"/>
</dbReference>
<dbReference type="CDD" id="cd00165">
    <property type="entry name" value="S4"/>
    <property type="match status" value="1"/>
</dbReference>
<dbReference type="FunFam" id="1.10.1050.10:FF:000001">
    <property type="entry name" value="30S ribosomal protein S4"/>
    <property type="match status" value="1"/>
</dbReference>
<dbReference type="FunFam" id="3.10.290.10:FF:000001">
    <property type="entry name" value="30S ribosomal protein S4"/>
    <property type="match status" value="1"/>
</dbReference>
<dbReference type="Gene3D" id="1.10.1050.10">
    <property type="entry name" value="Ribosomal Protein S4 Delta 41, Chain A, domain 1"/>
    <property type="match status" value="1"/>
</dbReference>
<dbReference type="Gene3D" id="3.10.290.10">
    <property type="entry name" value="RNA-binding S4 domain"/>
    <property type="match status" value="1"/>
</dbReference>
<dbReference type="HAMAP" id="MF_01306_B">
    <property type="entry name" value="Ribosomal_uS4_B"/>
    <property type="match status" value="1"/>
</dbReference>
<dbReference type="InterPro" id="IPR022801">
    <property type="entry name" value="Ribosomal_uS4"/>
</dbReference>
<dbReference type="InterPro" id="IPR005709">
    <property type="entry name" value="Ribosomal_uS4_bac-type"/>
</dbReference>
<dbReference type="InterPro" id="IPR018079">
    <property type="entry name" value="Ribosomal_uS4_CS"/>
</dbReference>
<dbReference type="InterPro" id="IPR001912">
    <property type="entry name" value="Ribosomal_uS4_N"/>
</dbReference>
<dbReference type="InterPro" id="IPR002942">
    <property type="entry name" value="S4_RNA-bd"/>
</dbReference>
<dbReference type="InterPro" id="IPR036986">
    <property type="entry name" value="S4_RNA-bd_sf"/>
</dbReference>
<dbReference type="NCBIfam" id="NF003717">
    <property type="entry name" value="PRK05327.1"/>
    <property type="match status" value="1"/>
</dbReference>
<dbReference type="NCBIfam" id="TIGR01017">
    <property type="entry name" value="rpsD_bact"/>
    <property type="match status" value="1"/>
</dbReference>
<dbReference type="PANTHER" id="PTHR11831">
    <property type="entry name" value="30S 40S RIBOSOMAL PROTEIN"/>
    <property type="match status" value="1"/>
</dbReference>
<dbReference type="PANTHER" id="PTHR11831:SF4">
    <property type="entry name" value="SMALL RIBOSOMAL SUBUNIT PROTEIN US4M"/>
    <property type="match status" value="1"/>
</dbReference>
<dbReference type="Pfam" id="PF00163">
    <property type="entry name" value="Ribosomal_S4"/>
    <property type="match status" value="1"/>
</dbReference>
<dbReference type="Pfam" id="PF01479">
    <property type="entry name" value="S4"/>
    <property type="match status" value="1"/>
</dbReference>
<dbReference type="SMART" id="SM01390">
    <property type="entry name" value="Ribosomal_S4"/>
    <property type="match status" value="1"/>
</dbReference>
<dbReference type="SMART" id="SM00363">
    <property type="entry name" value="S4"/>
    <property type="match status" value="1"/>
</dbReference>
<dbReference type="SUPFAM" id="SSF55174">
    <property type="entry name" value="Alpha-L RNA-binding motif"/>
    <property type="match status" value="1"/>
</dbReference>
<dbReference type="PROSITE" id="PS00632">
    <property type="entry name" value="RIBOSOMAL_S4"/>
    <property type="match status" value="1"/>
</dbReference>
<dbReference type="PROSITE" id="PS50889">
    <property type="entry name" value="S4"/>
    <property type="match status" value="1"/>
</dbReference>
<evidence type="ECO:0000255" key="1">
    <source>
        <dbReference type="HAMAP-Rule" id="MF_01306"/>
    </source>
</evidence>
<evidence type="ECO:0000256" key="2">
    <source>
        <dbReference type="SAM" id="MobiDB-lite"/>
    </source>
</evidence>
<evidence type="ECO:0000305" key="3"/>
<protein>
    <recommendedName>
        <fullName evidence="1">Small ribosomal subunit protein uS4</fullName>
    </recommendedName>
    <alternativeName>
        <fullName evidence="3">30S ribosomal protein S4</fullName>
    </alternativeName>
</protein>
<accession>Q71Z71</accession>
<proteinExistence type="inferred from homology"/>
<feature type="chain" id="PRO_0000132406" description="Small ribosomal subunit protein uS4">
    <location>
        <begin position="1"/>
        <end position="200"/>
    </location>
</feature>
<feature type="domain" description="S4 RNA-binding" evidence="1">
    <location>
        <begin position="92"/>
        <end position="170"/>
    </location>
</feature>
<feature type="region of interest" description="Disordered" evidence="2">
    <location>
        <begin position="22"/>
        <end position="43"/>
    </location>
</feature>
<reference key="1">
    <citation type="journal article" date="2004" name="Nucleic Acids Res.">
        <title>Whole genome comparisons of serotype 4b and 1/2a strains of the food-borne pathogen Listeria monocytogenes reveal new insights into the core genome components of this species.</title>
        <authorList>
            <person name="Nelson K.E."/>
            <person name="Fouts D.E."/>
            <person name="Mongodin E.F."/>
            <person name="Ravel J."/>
            <person name="DeBoy R.T."/>
            <person name="Kolonay J.F."/>
            <person name="Rasko D.A."/>
            <person name="Angiuoli S.V."/>
            <person name="Gill S.R."/>
            <person name="Paulsen I.T."/>
            <person name="Peterson J.D."/>
            <person name="White O."/>
            <person name="Nelson W.C."/>
            <person name="Nierman W.C."/>
            <person name="Beanan M.J."/>
            <person name="Brinkac L.M."/>
            <person name="Daugherty S.C."/>
            <person name="Dodson R.J."/>
            <person name="Durkin A.S."/>
            <person name="Madupu R."/>
            <person name="Haft D.H."/>
            <person name="Selengut J."/>
            <person name="Van Aken S.E."/>
            <person name="Khouri H.M."/>
            <person name="Fedorova N."/>
            <person name="Forberger H.A."/>
            <person name="Tran B."/>
            <person name="Kathariou S."/>
            <person name="Wonderling L.D."/>
            <person name="Uhlich G.A."/>
            <person name="Bayles D.O."/>
            <person name="Luchansky J.B."/>
            <person name="Fraser C.M."/>
        </authorList>
    </citation>
    <scope>NUCLEOTIDE SEQUENCE [LARGE SCALE GENOMIC DNA]</scope>
    <source>
        <strain>F2365</strain>
    </source>
</reference>
<keyword id="KW-0687">Ribonucleoprotein</keyword>
<keyword id="KW-0689">Ribosomal protein</keyword>
<keyword id="KW-0694">RNA-binding</keyword>
<keyword id="KW-0699">rRNA-binding</keyword>
<organism>
    <name type="scientific">Listeria monocytogenes serotype 4b (strain F2365)</name>
    <dbReference type="NCBI Taxonomy" id="265669"/>
    <lineage>
        <taxon>Bacteria</taxon>
        <taxon>Bacillati</taxon>
        <taxon>Bacillota</taxon>
        <taxon>Bacilli</taxon>
        <taxon>Bacillales</taxon>
        <taxon>Listeriaceae</taxon>
        <taxon>Listeria</taxon>
    </lineage>
</organism>
<gene>
    <name evidence="1" type="primary">rpsD</name>
    <name type="ordered locus">LMOf2365_1618</name>
</gene>
<comment type="function">
    <text evidence="1">One of the primary rRNA binding proteins, it binds directly to 16S rRNA where it nucleates assembly of the body of the 30S subunit.</text>
</comment>
<comment type="function">
    <text evidence="1">With S5 and S12 plays an important role in translational accuracy.</text>
</comment>
<comment type="subunit">
    <text evidence="1">Part of the 30S ribosomal subunit. Contacts protein S5. The interaction surface between S4 and S5 is involved in control of translational fidelity.</text>
</comment>
<comment type="similarity">
    <text evidence="1">Belongs to the universal ribosomal protein uS4 family.</text>
</comment>
<sequence length="200" mass="22723">MARYTGPSWKVSRRLGISLSGTGKELERRPYAPGQHGPTQRKKISEYGLQQAEKQKLRHMYGLTERQFKNTFNKAGKLQGKHGENFMILLEQRLDNIVYRLGLARTRRAARQLVNHGHITVDGKRVDIPSYQVSVGQVISVREKSAKNSAIAESLEVSSFVPEYVTFDAETLTGSLNRLPERSERAAEINEAFIVEFYSR</sequence>